<comment type="function">
    <text evidence="1">Binds 23S rRNA and is also seen to make contacts with the A and possibly P site tRNAs.</text>
</comment>
<comment type="subunit">
    <text evidence="1">Part of the 50S ribosomal subunit.</text>
</comment>
<comment type="similarity">
    <text evidence="1">Belongs to the universal ribosomal protein uL16 family.</text>
</comment>
<feature type="chain" id="PRO_1000142967" description="Large ribosomal subunit protein uL16">
    <location>
        <begin position="1"/>
        <end position="136"/>
    </location>
</feature>
<name>RL16_ECODH</name>
<accession>B1X6G5</accession>
<dbReference type="EMBL" id="CP000948">
    <property type="protein sequence ID" value="ACB04375.1"/>
    <property type="molecule type" value="Genomic_DNA"/>
</dbReference>
<dbReference type="RefSeq" id="WP_000941212.1">
    <property type="nucleotide sequence ID" value="NC_010473.1"/>
</dbReference>
<dbReference type="SMR" id="B1X6G5"/>
<dbReference type="GeneID" id="93778674"/>
<dbReference type="KEGG" id="ecd:ECDH10B_3488"/>
<dbReference type="HOGENOM" id="CLU_078858_2_1_6"/>
<dbReference type="GO" id="GO:0022625">
    <property type="term" value="C:cytosolic large ribosomal subunit"/>
    <property type="evidence" value="ECO:0007669"/>
    <property type="project" value="TreeGrafter"/>
</dbReference>
<dbReference type="GO" id="GO:0019843">
    <property type="term" value="F:rRNA binding"/>
    <property type="evidence" value="ECO:0007669"/>
    <property type="project" value="UniProtKB-UniRule"/>
</dbReference>
<dbReference type="GO" id="GO:0003735">
    <property type="term" value="F:structural constituent of ribosome"/>
    <property type="evidence" value="ECO:0007669"/>
    <property type="project" value="InterPro"/>
</dbReference>
<dbReference type="GO" id="GO:0000049">
    <property type="term" value="F:tRNA binding"/>
    <property type="evidence" value="ECO:0007669"/>
    <property type="project" value="UniProtKB-KW"/>
</dbReference>
<dbReference type="GO" id="GO:0006412">
    <property type="term" value="P:translation"/>
    <property type="evidence" value="ECO:0007669"/>
    <property type="project" value="UniProtKB-UniRule"/>
</dbReference>
<dbReference type="CDD" id="cd01433">
    <property type="entry name" value="Ribosomal_L16_L10e"/>
    <property type="match status" value="1"/>
</dbReference>
<dbReference type="FunFam" id="3.90.1170.10:FF:000001">
    <property type="entry name" value="50S ribosomal protein L16"/>
    <property type="match status" value="1"/>
</dbReference>
<dbReference type="Gene3D" id="3.90.1170.10">
    <property type="entry name" value="Ribosomal protein L10e/L16"/>
    <property type="match status" value="1"/>
</dbReference>
<dbReference type="HAMAP" id="MF_01342">
    <property type="entry name" value="Ribosomal_uL16"/>
    <property type="match status" value="1"/>
</dbReference>
<dbReference type="InterPro" id="IPR047873">
    <property type="entry name" value="Ribosomal_uL16"/>
</dbReference>
<dbReference type="InterPro" id="IPR000114">
    <property type="entry name" value="Ribosomal_uL16_bact-type"/>
</dbReference>
<dbReference type="InterPro" id="IPR020798">
    <property type="entry name" value="Ribosomal_uL16_CS"/>
</dbReference>
<dbReference type="InterPro" id="IPR016180">
    <property type="entry name" value="Ribosomal_uL16_dom"/>
</dbReference>
<dbReference type="InterPro" id="IPR036920">
    <property type="entry name" value="Ribosomal_uL16_sf"/>
</dbReference>
<dbReference type="NCBIfam" id="TIGR01164">
    <property type="entry name" value="rplP_bact"/>
    <property type="match status" value="1"/>
</dbReference>
<dbReference type="PANTHER" id="PTHR12220">
    <property type="entry name" value="50S/60S RIBOSOMAL PROTEIN L16"/>
    <property type="match status" value="1"/>
</dbReference>
<dbReference type="PANTHER" id="PTHR12220:SF13">
    <property type="entry name" value="LARGE RIBOSOMAL SUBUNIT PROTEIN UL16M"/>
    <property type="match status" value="1"/>
</dbReference>
<dbReference type="Pfam" id="PF00252">
    <property type="entry name" value="Ribosomal_L16"/>
    <property type="match status" value="1"/>
</dbReference>
<dbReference type="PRINTS" id="PR00060">
    <property type="entry name" value="RIBOSOMALL16"/>
</dbReference>
<dbReference type="SUPFAM" id="SSF54686">
    <property type="entry name" value="Ribosomal protein L16p/L10e"/>
    <property type="match status" value="1"/>
</dbReference>
<dbReference type="PROSITE" id="PS00586">
    <property type="entry name" value="RIBOSOMAL_L16_1"/>
    <property type="match status" value="1"/>
</dbReference>
<dbReference type="PROSITE" id="PS00701">
    <property type="entry name" value="RIBOSOMAL_L16_2"/>
    <property type="match status" value="1"/>
</dbReference>
<organism>
    <name type="scientific">Escherichia coli (strain K12 / DH10B)</name>
    <dbReference type="NCBI Taxonomy" id="316385"/>
    <lineage>
        <taxon>Bacteria</taxon>
        <taxon>Pseudomonadati</taxon>
        <taxon>Pseudomonadota</taxon>
        <taxon>Gammaproteobacteria</taxon>
        <taxon>Enterobacterales</taxon>
        <taxon>Enterobacteriaceae</taxon>
        <taxon>Escherichia</taxon>
    </lineage>
</organism>
<evidence type="ECO:0000255" key="1">
    <source>
        <dbReference type="HAMAP-Rule" id="MF_01342"/>
    </source>
</evidence>
<evidence type="ECO:0000305" key="2"/>
<gene>
    <name evidence="1" type="primary">rplP</name>
    <name type="ordered locus">ECDH10B_3488</name>
</gene>
<reference key="1">
    <citation type="journal article" date="2008" name="J. Bacteriol.">
        <title>The complete genome sequence of Escherichia coli DH10B: insights into the biology of a laboratory workhorse.</title>
        <authorList>
            <person name="Durfee T."/>
            <person name="Nelson R."/>
            <person name="Baldwin S."/>
            <person name="Plunkett G. III"/>
            <person name="Burland V."/>
            <person name="Mau B."/>
            <person name="Petrosino J.F."/>
            <person name="Qin X."/>
            <person name="Muzny D.M."/>
            <person name="Ayele M."/>
            <person name="Gibbs R.A."/>
            <person name="Csorgo B."/>
            <person name="Posfai G."/>
            <person name="Weinstock G.M."/>
            <person name="Blattner F.R."/>
        </authorList>
    </citation>
    <scope>NUCLEOTIDE SEQUENCE [LARGE SCALE GENOMIC DNA]</scope>
    <source>
        <strain>K12 / DH10B</strain>
    </source>
</reference>
<proteinExistence type="inferred from homology"/>
<keyword id="KW-0687">Ribonucleoprotein</keyword>
<keyword id="KW-0689">Ribosomal protein</keyword>
<keyword id="KW-0694">RNA-binding</keyword>
<keyword id="KW-0699">rRNA-binding</keyword>
<keyword id="KW-0820">tRNA-binding</keyword>
<protein>
    <recommendedName>
        <fullName evidence="1">Large ribosomal subunit protein uL16</fullName>
    </recommendedName>
    <alternativeName>
        <fullName evidence="2">50S ribosomal protein L16</fullName>
    </alternativeName>
</protein>
<sequence length="136" mass="15281">MLQPKRTKFRKMHKGRNRGLAQGTDVSFGSFGLKAVGRGRLTARQIEAARRAMTRAVKRQGKIWIRVFPDKPITEKPLAVRMGKGKGNVEYWVALIQPGKVLYEMDGVPEELAREAFKLAAAKLPIKTTFVTKTVM</sequence>